<comment type="function">
    <text evidence="1">Involved in cell division and chromosome segregation.</text>
</comment>
<comment type="similarity">
    <text evidence="1">Belongs to the WhiA family.</text>
</comment>
<proteinExistence type="inferred from homology"/>
<feature type="chain" id="PRO_0000376603" description="Probable cell division protein WhiA">
    <location>
        <begin position="1"/>
        <end position="315"/>
    </location>
</feature>
<feature type="DNA-binding region" description="H-T-H motif" evidence="1">
    <location>
        <begin position="280"/>
        <end position="313"/>
    </location>
</feature>
<gene>
    <name evidence="1" type="primary">whiA</name>
    <name type="ordered locus">Swol_0264</name>
</gene>
<evidence type="ECO:0000255" key="1">
    <source>
        <dbReference type="HAMAP-Rule" id="MF_01420"/>
    </source>
</evidence>
<reference key="1">
    <citation type="journal article" date="2010" name="Environ. Microbiol.">
        <title>The genome of Syntrophomonas wolfei: new insights into syntrophic metabolism and biohydrogen production.</title>
        <authorList>
            <person name="Sieber J.R."/>
            <person name="Sims D.R."/>
            <person name="Han C."/>
            <person name="Kim E."/>
            <person name="Lykidis A."/>
            <person name="Lapidus A.L."/>
            <person name="McDonnald E."/>
            <person name="Rohlin L."/>
            <person name="Culley D.E."/>
            <person name="Gunsalus R."/>
            <person name="McInerney M.J."/>
        </authorList>
    </citation>
    <scope>NUCLEOTIDE SEQUENCE [LARGE SCALE GENOMIC DNA]</scope>
    <source>
        <strain>DSM 2245B / Goettingen</strain>
    </source>
</reference>
<dbReference type="EMBL" id="CP000448">
    <property type="protein sequence ID" value="ABI67612.1"/>
    <property type="molecule type" value="Genomic_DNA"/>
</dbReference>
<dbReference type="RefSeq" id="WP_011639721.1">
    <property type="nucleotide sequence ID" value="NC_008346.1"/>
</dbReference>
<dbReference type="SMR" id="Q0B092"/>
<dbReference type="STRING" id="335541.Swol_0264"/>
<dbReference type="KEGG" id="swo:Swol_0264"/>
<dbReference type="eggNOG" id="COG1481">
    <property type="taxonomic scope" value="Bacteria"/>
</dbReference>
<dbReference type="HOGENOM" id="CLU_053282_0_0_9"/>
<dbReference type="OrthoDB" id="401278at2"/>
<dbReference type="Proteomes" id="UP000001968">
    <property type="component" value="Chromosome"/>
</dbReference>
<dbReference type="GO" id="GO:0003677">
    <property type="term" value="F:DNA binding"/>
    <property type="evidence" value="ECO:0007669"/>
    <property type="project" value="UniProtKB-UniRule"/>
</dbReference>
<dbReference type="GO" id="GO:0051301">
    <property type="term" value="P:cell division"/>
    <property type="evidence" value="ECO:0007669"/>
    <property type="project" value="UniProtKB-UniRule"/>
</dbReference>
<dbReference type="GO" id="GO:0043937">
    <property type="term" value="P:regulation of sporulation"/>
    <property type="evidence" value="ECO:0007669"/>
    <property type="project" value="InterPro"/>
</dbReference>
<dbReference type="Gene3D" id="3.10.28.10">
    <property type="entry name" value="Homing endonucleases"/>
    <property type="match status" value="1"/>
</dbReference>
<dbReference type="HAMAP" id="MF_01420">
    <property type="entry name" value="HTH_type_WhiA"/>
    <property type="match status" value="1"/>
</dbReference>
<dbReference type="InterPro" id="IPR027434">
    <property type="entry name" value="Homing_endonucl"/>
</dbReference>
<dbReference type="InterPro" id="IPR018478">
    <property type="entry name" value="Sporu_reg_WhiA_N_dom"/>
</dbReference>
<dbReference type="InterPro" id="IPR003802">
    <property type="entry name" value="Sporulation_regulator_WhiA"/>
</dbReference>
<dbReference type="InterPro" id="IPR023054">
    <property type="entry name" value="Sporulation_regulator_WhiA_C"/>
</dbReference>
<dbReference type="InterPro" id="IPR039518">
    <property type="entry name" value="WhiA_LAGLIDADG_dom"/>
</dbReference>
<dbReference type="NCBIfam" id="TIGR00647">
    <property type="entry name" value="DNA_bind_WhiA"/>
    <property type="match status" value="1"/>
</dbReference>
<dbReference type="PANTHER" id="PTHR37307">
    <property type="entry name" value="CELL DIVISION PROTEIN WHIA-RELATED"/>
    <property type="match status" value="1"/>
</dbReference>
<dbReference type="PANTHER" id="PTHR37307:SF1">
    <property type="entry name" value="CELL DIVISION PROTEIN WHIA-RELATED"/>
    <property type="match status" value="1"/>
</dbReference>
<dbReference type="Pfam" id="PF02650">
    <property type="entry name" value="HTH_WhiA"/>
    <property type="match status" value="1"/>
</dbReference>
<dbReference type="Pfam" id="PF14527">
    <property type="entry name" value="LAGLIDADG_WhiA"/>
    <property type="match status" value="1"/>
</dbReference>
<dbReference type="Pfam" id="PF10298">
    <property type="entry name" value="WhiA_N"/>
    <property type="match status" value="1"/>
</dbReference>
<dbReference type="SUPFAM" id="SSF55608">
    <property type="entry name" value="Homing endonucleases"/>
    <property type="match status" value="1"/>
</dbReference>
<name>WHIA_SYNWW</name>
<organism>
    <name type="scientific">Syntrophomonas wolfei subsp. wolfei (strain DSM 2245B / Goettingen)</name>
    <dbReference type="NCBI Taxonomy" id="335541"/>
    <lineage>
        <taxon>Bacteria</taxon>
        <taxon>Bacillati</taxon>
        <taxon>Bacillota</taxon>
        <taxon>Clostridia</taxon>
        <taxon>Eubacteriales</taxon>
        <taxon>Syntrophomonadaceae</taxon>
        <taxon>Syntrophomonas</taxon>
    </lineage>
</organism>
<keyword id="KW-0131">Cell cycle</keyword>
<keyword id="KW-0132">Cell division</keyword>
<keyword id="KW-0238">DNA-binding</keyword>
<keyword id="KW-1185">Reference proteome</keyword>
<sequence>MSFSSDVRNELARIIPEKECCRKAELAALLAISGDLVVGEDGRRILKVQADNAATARKIITLLKENYQIPSTFKALEQKRFKRKRIYEVNVLLDGEDEALNKELEEILLLREKETTPVLNRSLLGRTCCKRAYLRGIFLSRGSINRPEGEYHLELVLNDSRMALAVQKMLDKFALEPGLVERKNYLVVYLKESEKIVDFLRVVEASRALLNFENVRIIKSVRNNVNRQVNCETANLSKTIDASLRQIELIKRLLEEQGLEILPGNLRDLAEMRMSYTDASLKELGDLLDPPLSKSGVAYRMRKLEESVKEILQED</sequence>
<accession>Q0B092</accession>
<protein>
    <recommendedName>
        <fullName evidence="1">Probable cell division protein WhiA</fullName>
    </recommendedName>
</protein>